<proteinExistence type="evidence at transcript level"/>
<evidence type="ECO:0000250" key="1"/>
<evidence type="ECO:0000250" key="2">
    <source>
        <dbReference type="UniProtKB" id="P00441"/>
    </source>
</evidence>
<evidence type="ECO:0000250" key="3">
    <source>
        <dbReference type="UniProtKB" id="P00442"/>
    </source>
</evidence>
<evidence type="ECO:0000250" key="4">
    <source>
        <dbReference type="UniProtKB" id="P07632"/>
    </source>
</evidence>
<evidence type="ECO:0000250" key="5">
    <source>
        <dbReference type="UniProtKB" id="P08228"/>
    </source>
</evidence>
<evidence type="ECO:0000305" key="6"/>
<accession>Q8HXQ1</accession>
<accession>Q2PFU5</accession>
<keyword id="KW-0007">Acetylation</keyword>
<keyword id="KW-0049">Antioxidant</keyword>
<keyword id="KW-0186">Copper</keyword>
<keyword id="KW-0963">Cytoplasm</keyword>
<keyword id="KW-1015">Disulfide bond</keyword>
<keyword id="KW-0449">Lipoprotein</keyword>
<keyword id="KW-0479">Metal-binding</keyword>
<keyword id="KW-0539">Nucleus</keyword>
<keyword id="KW-0560">Oxidoreductase</keyword>
<keyword id="KW-0564">Palmitate</keyword>
<keyword id="KW-0597">Phosphoprotein</keyword>
<keyword id="KW-1185">Reference proteome</keyword>
<keyword id="KW-0862">Zinc</keyword>
<feature type="initiator methionine" description="Removed" evidence="3">
    <location>
        <position position="1"/>
    </location>
</feature>
<feature type="chain" id="PRO_0000164059" description="Superoxide dismutase [Cu-Zn]">
    <location>
        <begin position="2"/>
        <end position="154"/>
    </location>
</feature>
<feature type="binding site" evidence="1">
    <location>
        <position position="47"/>
    </location>
    <ligand>
        <name>Cu cation</name>
        <dbReference type="ChEBI" id="CHEBI:23378"/>
        <note>catalytic</note>
    </ligand>
</feature>
<feature type="binding site" evidence="1">
    <location>
        <position position="49"/>
    </location>
    <ligand>
        <name>Cu cation</name>
        <dbReference type="ChEBI" id="CHEBI:23378"/>
        <note>catalytic</note>
    </ligand>
</feature>
<feature type="binding site" evidence="1">
    <location>
        <position position="64"/>
    </location>
    <ligand>
        <name>Cu cation</name>
        <dbReference type="ChEBI" id="CHEBI:23378"/>
        <note>catalytic</note>
    </ligand>
</feature>
<feature type="binding site" evidence="1">
    <location>
        <position position="64"/>
    </location>
    <ligand>
        <name>Zn(2+)</name>
        <dbReference type="ChEBI" id="CHEBI:29105"/>
        <note>structural</note>
    </ligand>
</feature>
<feature type="binding site" evidence="1">
    <location>
        <position position="72"/>
    </location>
    <ligand>
        <name>Zn(2+)</name>
        <dbReference type="ChEBI" id="CHEBI:29105"/>
        <note>structural</note>
    </ligand>
</feature>
<feature type="binding site" evidence="1">
    <location>
        <position position="81"/>
    </location>
    <ligand>
        <name>Zn(2+)</name>
        <dbReference type="ChEBI" id="CHEBI:29105"/>
        <note>structural</note>
    </ligand>
</feature>
<feature type="binding site" evidence="1">
    <location>
        <position position="84"/>
    </location>
    <ligand>
        <name>Zn(2+)</name>
        <dbReference type="ChEBI" id="CHEBI:29105"/>
        <note>structural</note>
    </ligand>
</feature>
<feature type="binding site" evidence="1">
    <location>
        <position position="121"/>
    </location>
    <ligand>
        <name>Cu cation</name>
        <dbReference type="ChEBI" id="CHEBI:23378"/>
        <note>catalytic</note>
    </ligand>
</feature>
<feature type="modified residue" description="N-acetylalanine" evidence="3">
    <location>
        <position position="2"/>
    </location>
</feature>
<feature type="modified residue" description="N6-succinyllysine" evidence="5">
    <location>
        <position position="4"/>
    </location>
</feature>
<feature type="modified residue" description="N6-succinyllysine" evidence="5">
    <location>
        <position position="10"/>
    </location>
</feature>
<feature type="modified residue" description="N6-succinyllysine" evidence="5">
    <location>
        <position position="92"/>
    </location>
</feature>
<feature type="modified residue" description="Phosphoserine" evidence="2">
    <location>
        <position position="99"/>
    </location>
</feature>
<feature type="modified residue" description="Phosphoserine" evidence="2">
    <location>
        <position position="103"/>
    </location>
</feature>
<feature type="modified residue" description="Phosphoserine" evidence="4">
    <location>
        <position position="106"/>
    </location>
</feature>
<feature type="modified residue" description="Phosphoserine" evidence="5">
    <location>
        <position position="108"/>
    </location>
</feature>
<feature type="modified residue" description="N6-acetyllysine; alternate" evidence="2">
    <location>
        <position position="123"/>
    </location>
</feature>
<feature type="modified residue" description="N6-succinyllysine; alternate" evidence="2">
    <location>
        <position position="123"/>
    </location>
</feature>
<feature type="modified residue" description="N6-acetyllysine; alternate" evidence="5">
    <location>
        <position position="137"/>
    </location>
</feature>
<feature type="modified residue" description="N6-succinyllysine; alternate" evidence="5">
    <location>
        <position position="137"/>
    </location>
</feature>
<feature type="lipid moiety-binding region" description="S-palmitoyl cysteine" evidence="1">
    <location>
        <position position="7"/>
    </location>
</feature>
<feature type="disulfide bond" evidence="1">
    <location>
        <begin position="58"/>
        <end position="147"/>
    </location>
</feature>
<feature type="sequence conflict" description="In Ref. 2; BAE73025." evidence="6" ref="2">
    <original>F</original>
    <variation>Y</variation>
    <location>
        <position position="46"/>
    </location>
</feature>
<feature type="sequence conflict" description="In Ref. 2; BAE73025." evidence="6" ref="2">
    <original>Q</original>
    <variation>H</variation>
    <location>
        <position position="154"/>
    </location>
</feature>
<gene>
    <name evidence="2" type="primary">SOD1</name>
    <name type="ORF">QmoA-14762</name>
</gene>
<dbReference type="EC" id="1.15.1.1" evidence="2"/>
<dbReference type="EMBL" id="AB087270">
    <property type="protein sequence ID" value="BAC20349.1"/>
    <property type="molecule type" value="mRNA"/>
</dbReference>
<dbReference type="EMBL" id="AB220492">
    <property type="protein sequence ID" value="BAE73025.1"/>
    <property type="molecule type" value="mRNA"/>
</dbReference>
<dbReference type="RefSeq" id="NP_001272335.1">
    <property type="nucleotide sequence ID" value="NM_001285406.1"/>
</dbReference>
<dbReference type="RefSeq" id="XP_045245173.1">
    <property type="nucleotide sequence ID" value="XM_045389238.2"/>
</dbReference>
<dbReference type="SMR" id="Q8HXQ1"/>
<dbReference type="STRING" id="9541.ENSMFAP00000040978"/>
<dbReference type="Ensembl" id="ENSMFAT00000015250.2">
    <property type="protein sequence ID" value="ENSMFAP00000040978.1"/>
    <property type="gene ID" value="ENSMFAG00000041240.2"/>
</dbReference>
<dbReference type="GeneID" id="102118687"/>
<dbReference type="VEuPathDB" id="HostDB:ENSMFAG00000041240"/>
<dbReference type="eggNOG" id="KOG0441">
    <property type="taxonomic scope" value="Eukaryota"/>
</dbReference>
<dbReference type="GeneTree" id="ENSGT00940000155551"/>
<dbReference type="OMA" id="AQRGFHI"/>
<dbReference type="Proteomes" id="UP000233100">
    <property type="component" value="Chromosome 3"/>
</dbReference>
<dbReference type="Bgee" id="ENSMFAG00000041240">
    <property type="expression patterns" value="Expressed in adult mammalian kidney and 13 other cell types or tissues"/>
</dbReference>
<dbReference type="GO" id="GO:0005737">
    <property type="term" value="C:cytoplasm"/>
    <property type="evidence" value="ECO:0000250"/>
    <property type="project" value="UniProtKB"/>
</dbReference>
<dbReference type="GO" id="GO:0031410">
    <property type="term" value="C:cytoplasmic vesicle"/>
    <property type="evidence" value="ECO:0000250"/>
    <property type="project" value="UniProtKB"/>
</dbReference>
<dbReference type="GO" id="GO:0005829">
    <property type="term" value="C:cytosol"/>
    <property type="evidence" value="ECO:0000250"/>
    <property type="project" value="UniProtKB"/>
</dbReference>
<dbReference type="GO" id="GO:0032839">
    <property type="term" value="C:dendrite cytoplasm"/>
    <property type="evidence" value="ECO:0000250"/>
    <property type="project" value="UniProtKB"/>
</dbReference>
<dbReference type="GO" id="GO:0005615">
    <property type="term" value="C:extracellular space"/>
    <property type="evidence" value="ECO:0000250"/>
    <property type="project" value="UniProtKB"/>
</dbReference>
<dbReference type="GO" id="GO:0005739">
    <property type="term" value="C:mitochondrion"/>
    <property type="evidence" value="ECO:0000250"/>
    <property type="project" value="UniProtKB"/>
</dbReference>
<dbReference type="GO" id="GO:0043025">
    <property type="term" value="C:neuronal cell body"/>
    <property type="evidence" value="ECO:0000250"/>
    <property type="project" value="UniProtKB"/>
</dbReference>
<dbReference type="GO" id="GO:0005634">
    <property type="term" value="C:nucleus"/>
    <property type="evidence" value="ECO:0000250"/>
    <property type="project" value="UniProtKB"/>
</dbReference>
<dbReference type="GO" id="GO:0032991">
    <property type="term" value="C:protein-containing complex"/>
    <property type="evidence" value="ECO:0000250"/>
    <property type="project" value="UniProtKB"/>
</dbReference>
<dbReference type="GO" id="GO:0005507">
    <property type="term" value="F:copper ion binding"/>
    <property type="evidence" value="ECO:0000250"/>
    <property type="project" value="UniProtKB"/>
</dbReference>
<dbReference type="GO" id="GO:0030346">
    <property type="term" value="F:protein phosphatase 2B binding"/>
    <property type="evidence" value="ECO:0000250"/>
    <property type="project" value="UniProtKB"/>
</dbReference>
<dbReference type="GO" id="GO:0051087">
    <property type="term" value="F:protein-folding chaperone binding"/>
    <property type="evidence" value="ECO:0000250"/>
    <property type="project" value="UniProtKB"/>
</dbReference>
<dbReference type="GO" id="GO:0004784">
    <property type="term" value="F:superoxide dismutase activity"/>
    <property type="evidence" value="ECO:0000250"/>
    <property type="project" value="UniProtKB"/>
</dbReference>
<dbReference type="GO" id="GO:0008270">
    <property type="term" value="F:zinc ion binding"/>
    <property type="evidence" value="ECO:0000250"/>
    <property type="project" value="UniProtKB"/>
</dbReference>
<dbReference type="GO" id="GO:0060088">
    <property type="term" value="P:auditory receptor cell stereocilium organization"/>
    <property type="evidence" value="ECO:0000250"/>
    <property type="project" value="UniProtKB"/>
</dbReference>
<dbReference type="GO" id="GO:0007566">
    <property type="term" value="P:embryo implantation"/>
    <property type="evidence" value="ECO:0000250"/>
    <property type="project" value="UniProtKB"/>
</dbReference>
<dbReference type="GO" id="GO:0006749">
    <property type="term" value="P:glutathione metabolic process"/>
    <property type="evidence" value="ECO:0000250"/>
    <property type="project" value="UniProtKB"/>
</dbReference>
<dbReference type="GO" id="GO:0060047">
    <property type="term" value="P:heart contraction"/>
    <property type="evidence" value="ECO:0000250"/>
    <property type="project" value="UniProtKB"/>
</dbReference>
<dbReference type="GO" id="GO:0050665">
    <property type="term" value="P:hydrogen peroxide biosynthetic process"/>
    <property type="evidence" value="ECO:0000250"/>
    <property type="project" value="UniProtKB"/>
</dbReference>
<dbReference type="GO" id="GO:0006879">
    <property type="term" value="P:intracellular iron ion homeostasis"/>
    <property type="evidence" value="ECO:0000250"/>
    <property type="project" value="UniProtKB"/>
</dbReference>
<dbReference type="GO" id="GO:0007626">
    <property type="term" value="P:locomotory behavior"/>
    <property type="evidence" value="ECO:0000250"/>
    <property type="project" value="UniProtKB"/>
</dbReference>
<dbReference type="GO" id="GO:0046716">
    <property type="term" value="P:muscle cell cellular homeostasis"/>
    <property type="evidence" value="ECO:0000250"/>
    <property type="project" value="UniProtKB"/>
</dbReference>
<dbReference type="GO" id="GO:0002262">
    <property type="term" value="P:myeloid cell homeostasis"/>
    <property type="evidence" value="ECO:0000250"/>
    <property type="project" value="UniProtKB"/>
</dbReference>
<dbReference type="GO" id="GO:0043524">
    <property type="term" value="P:negative regulation of neuron apoptotic process"/>
    <property type="evidence" value="ECO:0000250"/>
    <property type="project" value="UniProtKB"/>
</dbReference>
<dbReference type="GO" id="GO:0060052">
    <property type="term" value="P:neurofilament cytoskeleton organization"/>
    <property type="evidence" value="ECO:0000250"/>
    <property type="project" value="UniProtKB"/>
</dbReference>
<dbReference type="GO" id="GO:0001541">
    <property type="term" value="P:ovarian follicle development"/>
    <property type="evidence" value="ECO:0000250"/>
    <property type="project" value="UniProtKB"/>
</dbReference>
<dbReference type="GO" id="GO:0032287">
    <property type="term" value="P:peripheral nervous system myelin maintenance"/>
    <property type="evidence" value="ECO:0000250"/>
    <property type="project" value="UniProtKB"/>
</dbReference>
<dbReference type="GO" id="GO:0001819">
    <property type="term" value="P:positive regulation of cytokine production"/>
    <property type="evidence" value="ECO:0000250"/>
    <property type="project" value="UniProtKB"/>
</dbReference>
<dbReference type="GO" id="GO:0043410">
    <property type="term" value="P:positive regulation of MAPK cascade"/>
    <property type="evidence" value="ECO:0000250"/>
    <property type="project" value="UniProtKB"/>
</dbReference>
<dbReference type="GO" id="GO:0072593">
    <property type="term" value="P:reactive oxygen species metabolic process"/>
    <property type="evidence" value="ECO:0000250"/>
    <property type="project" value="UniProtKB"/>
</dbReference>
<dbReference type="GO" id="GO:0008217">
    <property type="term" value="P:regulation of blood pressure"/>
    <property type="evidence" value="ECO:0000250"/>
    <property type="project" value="UniProtKB"/>
</dbReference>
<dbReference type="GO" id="GO:0051881">
    <property type="term" value="P:regulation of mitochondrial membrane potential"/>
    <property type="evidence" value="ECO:0000250"/>
    <property type="project" value="UniProtKB"/>
</dbReference>
<dbReference type="GO" id="GO:0040014">
    <property type="term" value="P:regulation of multicellular organism growth"/>
    <property type="evidence" value="ECO:0000250"/>
    <property type="project" value="UniProtKB"/>
</dbReference>
<dbReference type="GO" id="GO:0060087">
    <property type="term" value="P:relaxation of vascular associated smooth muscle"/>
    <property type="evidence" value="ECO:0000250"/>
    <property type="project" value="UniProtKB"/>
</dbReference>
<dbReference type="GO" id="GO:0019430">
    <property type="term" value="P:removal of superoxide radicals"/>
    <property type="evidence" value="ECO:0000250"/>
    <property type="project" value="UniProtKB"/>
</dbReference>
<dbReference type="GO" id="GO:0048678">
    <property type="term" value="P:response to axon injury"/>
    <property type="evidence" value="ECO:0000250"/>
    <property type="project" value="UniProtKB"/>
</dbReference>
<dbReference type="GO" id="GO:0045471">
    <property type="term" value="P:response to ethanol"/>
    <property type="evidence" value="ECO:0000250"/>
    <property type="project" value="UniProtKB"/>
</dbReference>
<dbReference type="GO" id="GO:0009408">
    <property type="term" value="P:response to heat"/>
    <property type="evidence" value="ECO:0000250"/>
    <property type="project" value="UniProtKB"/>
</dbReference>
<dbReference type="GO" id="GO:0042542">
    <property type="term" value="P:response to hydrogen peroxide"/>
    <property type="evidence" value="ECO:0000250"/>
    <property type="project" value="UniProtKB"/>
</dbReference>
<dbReference type="GO" id="GO:0000303">
    <property type="term" value="P:response to superoxide"/>
    <property type="evidence" value="ECO:0000250"/>
    <property type="project" value="UniProtKB"/>
</dbReference>
<dbReference type="GO" id="GO:0001895">
    <property type="term" value="P:retina homeostasis"/>
    <property type="evidence" value="ECO:0000250"/>
    <property type="project" value="UniProtKB"/>
</dbReference>
<dbReference type="GO" id="GO:0007605">
    <property type="term" value="P:sensory perception of sound"/>
    <property type="evidence" value="ECO:0000250"/>
    <property type="project" value="UniProtKB"/>
</dbReference>
<dbReference type="GO" id="GO:0007283">
    <property type="term" value="P:spermatogenesis"/>
    <property type="evidence" value="ECO:0000250"/>
    <property type="project" value="UniProtKB"/>
</dbReference>
<dbReference type="GO" id="GO:0006801">
    <property type="term" value="P:superoxide metabolic process"/>
    <property type="evidence" value="ECO:0000250"/>
    <property type="project" value="UniProtKB"/>
</dbReference>
<dbReference type="GO" id="GO:0019226">
    <property type="term" value="P:transmission of nerve impulse"/>
    <property type="evidence" value="ECO:0000250"/>
    <property type="project" value="UniProtKB"/>
</dbReference>
<dbReference type="CDD" id="cd00305">
    <property type="entry name" value="Cu-Zn_Superoxide_Dismutase"/>
    <property type="match status" value="1"/>
</dbReference>
<dbReference type="FunFam" id="2.60.40.200:FF:000001">
    <property type="entry name" value="Superoxide dismutase [Cu-Zn]"/>
    <property type="match status" value="1"/>
</dbReference>
<dbReference type="Gene3D" id="2.60.40.200">
    <property type="entry name" value="Superoxide dismutase, copper/zinc binding domain"/>
    <property type="match status" value="1"/>
</dbReference>
<dbReference type="InterPro" id="IPR036423">
    <property type="entry name" value="SOD-like_Cu/Zn_dom_sf"/>
</dbReference>
<dbReference type="InterPro" id="IPR024134">
    <property type="entry name" value="SOD_Cu/Zn_/chaperone"/>
</dbReference>
<dbReference type="InterPro" id="IPR018152">
    <property type="entry name" value="SOD_Cu/Zn_BS"/>
</dbReference>
<dbReference type="InterPro" id="IPR001424">
    <property type="entry name" value="SOD_Cu_Zn_dom"/>
</dbReference>
<dbReference type="PANTHER" id="PTHR10003">
    <property type="entry name" value="SUPEROXIDE DISMUTASE CU-ZN -RELATED"/>
    <property type="match status" value="1"/>
</dbReference>
<dbReference type="Pfam" id="PF00080">
    <property type="entry name" value="Sod_Cu"/>
    <property type="match status" value="1"/>
</dbReference>
<dbReference type="PRINTS" id="PR00068">
    <property type="entry name" value="CUZNDISMTASE"/>
</dbReference>
<dbReference type="SUPFAM" id="SSF49329">
    <property type="entry name" value="Cu,Zn superoxide dismutase-like"/>
    <property type="match status" value="1"/>
</dbReference>
<dbReference type="PROSITE" id="PS00087">
    <property type="entry name" value="SOD_CU_ZN_1"/>
    <property type="match status" value="1"/>
</dbReference>
<dbReference type="PROSITE" id="PS00332">
    <property type="entry name" value="SOD_CU_ZN_2"/>
    <property type="match status" value="1"/>
</dbReference>
<name>SODC_MACFA</name>
<reference key="1">
    <citation type="journal article" date="2002" name="Gene">
        <title>Structure, molecular evolution, and gene expression of primate superoxide dismutases.</title>
        <authorList>
            <person name="Fukuhara R."/>
            <person name="Tezuka T."/>
            <person name="Kageyama T."/>
        </authorList>
    </citation>
    <scope>NUCLEOTIDE SEQUENCE [MRNA]</scope>
</reference>
<reference key="2">
    <citation type="submission" date="2005-07" db="EMBL/GenBank/DDBJ databases">
        <title>Analysis of gene expression in cynomolgus monkey tissues by macaque cDNA oligo-chips.</title>
        <authorList>
            <person name="Kobayashi M."/>
            <person name="Tanuma R."/>
            <person name="Hirata M."/>
            <person name="Osada N."/>
            <person name="Kusuda J."/>
            <person name="Sugano S."/>
            <person name="Hashimoto K."/>
        </authorList>
    </citation>
    <scope>NUCLEOTIDE SEQUENCE [LARGE SCALE MRNA]</scope>
    <source>
        <tissue>Medulla oblongata</tissue>
    </source>
</reference>
<comment type="function">
    <text>Destroys radicals which are normally produced within the cells and which are toxic to biological systems.</text>
</comment>
<comment type="catalytic activity">
    <reaction>
        <text>2 superoxide + 2 H(+) = H2O2 + O2</text>
        <dbReference type="Rhea" id="RHEA:20696"/>
        <dbReference type="ChEBI" id="CHEBI:15378"/>
        <dbReference type="ChEBI" id="CHEBI:15379"/>
        <dbReference type="ChEBI" id="CHEBI:16240"/>
        <dbReference type="ChEBI" id="CHEBI:18421"/>
        <dbReference type="EC" id="1.15.1.1"/>
    </reaction>
</comment>
<comment type="cofactor">
    <cofactor evidence="1">
        <name>Cu cation</name>
        <dbReference type="ChEBI" id="CHEBI:23378"/>
    </cofactor>
    <text evidence="1">Binds 1 copper ion per subunit.</text>
</comment>
<comment type="cofactor">
    <cofactor evidence="1">
        <name>Zn(2+)</name>
        <dbReference type="ChEBI" id="CHEBI:29105"/>
    </cofactor>
    <text evidence="1">Binds 1 zinc ion per subunit.</text>
</comment>
<comment type="subunit">
    <text evidence="2 5">Homodimer; non-disulfide-linked (By similarity). Heterodimer with SOD1. The heterodimer CCS:SOD1 interacts with SLC31A1; this heterotrimer is Cu(1+)-mediated and its maintenance is regulated through SOD1 activation (By similarity).</text>
</comment>
<comment type="subcellular location">
    <subcellularLocation>
        <location evidence="1">Cytoplasm</location>
    </subcellularLocation>
    <subcellularLocation>
        <location evidence="1">Nucleus</location>
    </subcellularLocation>
</comment>
<comment type="PTM">
    <text evidence="1">Palmitoylation helps nuclear targeting and decreases catalytic activity.</text>
</comment>
<comment type="PTM">
    <text evidence="2">Succinylation, adjacent to copper catalytic site, probably inhibits activity. Desuccinylation by SIRT5 enhances activity.</text>
</comment>
<comment type="similarity">
    <text evidence="6">Belongs to the Cu-Zn superoxide dismutase family.</text>
</comment>
<organism>
    <name type="scientific">Macaca fascicularis</name>
    <name type="common">Crab-eating macaque</name>
    <name type="synonym">Cynomolgus monkey</name>
    <dbReference type="NCBI Taxonomy" id="9541"/>
    <lineage>
        <taxon>Eukaryota</taxon>
        <taxon>Metazoa</taxon>
        <taxon>Chordata</taxon>
        <taxon>Craniata</taxon>
        <taxon>Vertebrata</taxon>
        <taxon>Euteleostomi</taxon>
        <taxon>Mammalia</taxon>
        <taxon>Eutheria</taxon>
        <taxon>Euarchontoglires</taxon>
        <taxon>Primates</taxon>
        <taxon>Haplorrhini</taxon>
        <taxon>Catarrhini</taxon>
        <taxon>Cercopithecidae</taxon>
        <taxon>Cercopithecinae</taxon>
        <taxon>Macaca</taxon>
    </lineage>
</organism>
<protein>
    <recommendedName>
        <fullName evidence="2">Superoxide dismutase [Cu-Zn]</fullName>
        <ecNumber evidence="2">1.15.1.1</ecNumber>
    </recommendedName>
</protein>
<sequence length="154" mass="15983">MAMKAVCVLKGDSPVQGTINFEQKESNGPVKVWGSITGLTEGLHGFHVHQFGDNTQGCTSAGPHFNPLSRQHGGPKDEERHVGDLGNVTAGKDGVAKVSFEDSVISLSGDHSIIGRTLVVHEKADDLGKGGNEESKKTGNAGGRLACGVIGIAQ</sequence>